<gene>
    <name evidence="1" type="primary">dcd</name>
    <name type="ordered locus">Bcenmc03_2438</name>
</gene>
<organism>
    <name type="scientific">Burkholderia orbicola (strain MC0-3)</name>
    <dbReference type="NCBI Taxonomy" id="406425"/>
    <lineage>
        <taxon>Bacteria</taxon>
        <taxon>Pseudomonadati</taxon>
        <taxon>Pseudomonadota</taxon>
        <taxon>Betaproteobacteria</taxon>
        <taxon>Burkholderiales</taxon>
        <taxon>Burkholderiaceae</taxon>
        <taxon>Burkholderia</taxon>
        <taxon>Burkholderia cepacia complex</taxon>
        <taxon>Burkholderia orbicola</taxon>
    </lineage>
</organism>
<sequence>MSIKSDKWIRRMAEEHKMIEPFVPDQVRASEDGRRIVSYGTSSYGYDIRCADEFKIFTNINSTIVDPKNFDEGSFVDFKGDVCIIPPNSFALARTVEYFRIPRTVLTVCLGKSTYARCGIIVNVTPFEPEWEGYVTLEFSNTTPLPAKIYANEGVAQVLFFESDEVCDVSYADRGGKYQGQRGVTLPKT</sequence>
<name>DCD_BURO0</name>
<dbReference type="EC" id="3.5.4.13" evidence="1"/>
<dbReference type="EMBL" id="CP000958">
    <property type="protein sequence ID" value="ACA91599.1"/>
    <property type="molecule type" value="Genomic_DNA"/>
</dbReference>
<dbReference type="RefSeq" id="WP_006398615.1">
    <property type="nucleotide sequence ID" value="NC_010508.1"/>
</dbReference>
<dbReference type="SMR" id="B1JWR9"/>
<dbReference type="GeneID" id="98107731"/>
<dbReference type="KEGG" id="bcm:Bcenmc03_2438"/>
<dbReference type="HOGENOM" id="CLU_087476_4_0_4"/>
<dbReference type="UniPathway" id="UPA00610">
    <property type="reaction ID" value="UER00665"/>
</dbReference>
<dbReference type="Proteomes" id="UP000002169">
    <property type="component" value="Chromosome 1"/>
</dbReference>
<dbReference type="GO" id="GO:0008829">
    <property type="term" value="F:dCTP deaminase activity"/>
    <property type="evidence" value="ECO:0007669"/>
    <property type="project" value="UniProtKB-UniRule"/>
</dbReference>
<dbReference type="GO" id="GO:0000166">
    <property type="term" value="F:nucleotide binding"/>
    <property type="evidence" value="ECO:0007669"/>
    <property type="project" value="UniProtKB-KW"/>
</dbReference>
<dbReference type="GO" id="GO:0006226">
    <property type="term" value="P:dUMP biosynthetic process"/>
    <property type="evidence" value="ECO:0007669"/>
    <property type="project" value="UniProtKB-UniPathway"/>
</dbReference>
<dbReference type="GO" id="GO:0006229">
    <property type="term" value="P:dUTP biosynthetic process"/>
    <property type="evidence" value="ECO:0007669"/>
    <property type="project" value="UniProtKB-UniRule"/>
</dbReference>
<dbReference type="GO" id="GO:0015949">
    <property type="term" value="P:nucleobase-containing small molecule interconversion"/>
    <property type="evidence" value="ECO:0007669"/>
    <property type="project" value="TreeGrafter"/>
</dbReference>
<dbReference type="CDD" id="cd07557">
    <property type="entry name" value="trimeric_dUTPase"/>
    <property type="match status" value="1"/>
</dbReference>
<dbReference type="FunFam" id="2.70.40.10:FF:000001">
    <property type="entry name" value="dCTP deaminase"/>
    <property type="match status" value="1"/>
</dbReference>
<dbReference type="Gene3D" id="2.70.40.10">
    <property type="match status" value="1"/>
</dbReference>
<dbReference type="HAMAP" id="MF_00146">
    <property type="entry name" value="dCTP_deaminase"/>
    <property type="match status" value="1"/>
</dbReference>
<dbReference type="InterPro" id="IPR011962">
    <property type="entry name" value="dCTP_deaminase"/>
</dbReference>
<dbReference type="InterPro" id="IPR036157">
    <property type="entry name" value="dUTPase-like_sf"/>
</dbReference>
<dbReference type="InterPro" id="IPR033704">
    <property type="entry name" value="dUTPase_trimeric"/>
</dbReference>
<dbReference type="NCBIfam" id="TIGR02274">
    <property type="entry name" value="dCTP_deam"/>
    <property type="match status" value="1"/>
</dbReference>
<dbReference type="PANTHER" id="PTHR42680">
    <property type="entry name" value="DCTP DEAMINASE"/>
    <property type="match status" value="1"/>
</dbReference>
<dbReference type="PANTHER" id="PTHR42680:SF3">
    <property type="entry name" value="DCTP DEAMINASE"/>
    <property type="match status" value="1"/>
</dbReference>
<dbReference type="Pfam" id="PF22769">
    <property type="entry name" value="DCD"/>
    <property type="match status" value="1"/>
</dbReference>
<dbReference type="SUPFAM" id="SSF51283">
    <property type="entry name" value="dUTPase-like"/>
    <property type="match status" value="1"/>
</dbReference>
<comment type="function">
    <text evidence="1">Catalyzes the deamination of dCTP to dUTP.</text>
</comment>
<comment type="catalytic activity">
    <reaction evidence="1">
        <text>dCTP + H2O + H(+) = dUTP + NH4(+)</text>
        <dbReference type="Rhea" id="RHEA:22680"/>
        <dbReference type="ChEBI" id="CHEBI:15377"/>
        <dbReference type="ChEBI" id="CHEBI:15378"/>
        <dbReference type="ChEBI" id="CHEBI:28938"/>
        <dbReference type="ChEBI" id="CHEBI:61481"/>
        <dbReference type="ChEBI" id="CHEBI:61555"/>
        <dbReference type="EC" id="3.5.4.13"/>
    </reaction>
</comment>
<comment type="pathway">
    <text evidence="1">Pyrimidine metabolism; dUMP biosynthesis; dUMP from dCTP (dUTP route): step 1/2.</text>
</comment>
<comment type="subunit">
    <text evidence="1">Homotrimer.</text>
</comment>
<comment type="similarity">
    <text evidence="1">Belongs to the dCTP deaminase family.</text>
</comment>
<proteinExistence type="inferred from homology"/>
<feature type="chain" id="PRO_1000096409" description="dCTP deaminase">
    <location>
        <begin position="1"/>
        <end position="189"/>
    </location>
</feature>
<feature type="active site" description="Proton donor/acceptor" evidence="1">
    <location>
        <position position="138"/>
    </location>
</feature>
<feature type="binding site" evidence="1">
    <location>
        <begin position="112"/>
        <end position="117"/>
    </location>
    <ligand>
        <name>dCTP</name>
        <dbReference type="ChEBI" id="CHEBI:61481"/>
    </ligand>
</feature>
<feature type="binding site" evidence="1">
    <location>
        <begin position="136"/>
        <end position="138"/>
    </location>
    <ligand>
        <name>dCTP</name>
        <dbReference type="ChEBI" id="CHEBI:61481"/>
    </ligand>
</feature>
<feature type="binding site" evidence="1">
    <location>
        <position position="157"/>
    </location>
    <ligand>
        <name>dCTP</name>
        <dbReference type="ChEBI" id="CHEBI:61481"/>
    </ligand>
</feature>
<feature type="binding site" evidence="1">
    <location>
        <position position="171"/>
    </location>
    <ligand>
        <name>dCTP</name>
        <dbReference type="ChEBI" id="CHEBI:61481"/>
    </ligand>
</feature>
<feature type="binding site" evidence="1">
    <location>
        <position position="181"/>
    </location>
    <ligand>
        <name>dCTP</name>
        <dbReference type="ChEBI" id="CHEBI:61481"/>
    </ligand>
</feature>
<protein>
    <recommendedName>
        <fullName evidence="1">dCTP deaminase</fullName>
        <ecNumber evidence="1">3.5.4.13</ecNumber>
    </recommendedName>
    <alternativeName>
        <fullName evidence="1">Deoxycytidine triphosphate deaminase</fullName>
    </alternativeName>
</protein>
<accession>B1JWR9</accession>
<evidence type="ECO:0000255" key="1">
    <source>
        <dbReference type="HAMAP-Rule" id="MF_00146"/>
    </source>
</evidence>
<keyword id="KW-0378">Hydrolase</keyword>
<keyword id="KW-0546">Nucleotide metabolism</keyword>
<keyword id="KW-0547">Nucleotide-binding</keyword>
<reference key="1">
    <citation type="submission" date="2008-02" db="EMBL/GenBank/DDBJ databases">
        <title>Complete sequence of chromosome 1 of Burkholderia cenocepacia MC0-3.</title>
        <authorList>
            <person name="Copeland A."/>
            <person name="Lucas S."/>
            <person name="Lapidus A."/>
            <person name="Barry K."/>
            <person name="Bruce D."/>
            <person name="Goodwin L."/>
            <person name="Glavina del Rio T."/>
            <person name="Dalin E."/>
            <person name="Tice H."/>
            <person name="Pitluck S."/>
            <person name="Chain P."/>
            <person name="Malfatti S."/>
            <person name="Shin M."/>
            <person name="Vergez L."/>
            <person name="Schmutz J."/>
            <person name="Larimer F."/>
            <person name="Land M."/>
            <person name="Hauser L."/>
            <person name="Kyrpides N."/>
            <person name="Mikhailova N."/>
            <person name="Tiedje J."/>
            <person name="Richardson P."/>
        </authorList>
    </citation>
    <scope>NUCLEOTIDE SEQUENCE [LARGE SCALE GENOMIC DNA]</scope>
    <source>
        <strain>MC0-3</strain>
    </source>
</reference>